<name>NDHS_ARATH</name>
<organism evidence="11">
    <name type="scientific">Arabidopsis thaliana</name>
    <name type="common">Mouse-ear cress</name>
    <dbReference type="NCBI Taxonomy" id="3702"/>
    <lineage>
        <taxon>Eukaryota</taxon>
        <taxon>Viridiplantae</taxon>
        <taxon>Streptophyta</taxon>
        <taxon>Embryophyta</taxon>
        <taxon>Tracheophyta</taxon>
        <taxon>Spermatophyta</taxon>
        <taxon>Magnoliopsida</taxon>
        <taxon>eudicotyledons</taxon>
        <taxon>Gunneridae</taxon>
        <taxon>Pentapetalae</taxon>
        <taxon>rosids</taxon>
        <taxon>malvids</taxon>
        <taxon>Brassicales</taxon>
        <taxon>Brassicaceae</taxon>
        <taxon>Camelineae</taxon>
        <taxon>Arabidopsis</taxon>
    </lineage>
</organism>
<gene>
    <name evidence="7" type="primary">ndhS</name>
    <name evidence="6" type="synonym">CRR31</name>
    <name evidence="9" type="ordered locus">At4g23890</name>
    <name evidence="10" type="ORF">T32A16.60</name>
</gene>
<proteinExistence type="evidence at protein level"/>
<reference key="1">
    <citation type="journal article" date="1999" name="Nature">
        <title>Sequence and analysis of chromosome 4 of the plant Arabidopsis thaliana.</title>
        <authorList>
            <person name="Mayer K.F.X."/>
            <person name="Schueller C."/>
            <person name="Wambutt R."/>
            <person name="Murphy G."/>
            <person name="Volckaert G."/>
            <person name="Pohl T."/>
            <person name="Duesterhoeft A."/>
            <person name="Stiekema W."/>
            <person name="Entian K.-D."/>
            <person name="Terryn N."/>
            <person name="Harris B."/>
            <person name="Ansorge W."/>
            <person name="Brandt P."/>
            <person name="Grivell L.A."/>
            <person name="Rieger M."/>
            <person name="Weichselgartner M."/>
            <person name="de Simone V."/>
            <person name="Obermaier B."/>
            <person name="Mache R."/>
            <person name="Mueller M."/>
            <person name="Kreis M."/>
            <person name="Delseny M."/>
            <person name="Puigdomenech P."/>
            <person name="Watson M."/>
            <person name="Schmidtheini T."/>
            <person name="Reichert B."/>
            <person name="Portetelle D."/>
            <person name="Perez-Alonso M."/>
            <person name="Boutry M."/>
            <person name="Bancroft I."/>
            <person name="Vos P."/>
            <person name="Hoheisel J."/>
            <person name="Zimmermann W."/>
            <person name="Wedler H."/>
            <person name="Ridley P."/>
            <person name="Langham S.-A."/>
            <person name="McCullagh B."/>
            <person name="Bilham L."/>
            <person name="Robben J."/>
            <person name="van der Schueren J."/>
            <person name="Grymonprez B."/>
            <person name="Chuang Y.-J."/>
            <person name="Vandenbussche F."/>
            <person name="Braeken M."/>
            <person name="Weltjens I."/>
            <person name="Voet M."/>
            <person name="Bastiaens I."/>
            <person name="Aert R."/>
            <person name="Defoor E."/>
            <person name="Weitzenegger T."/>
            <person name="Bothe G."/>
            <person name="Ramsperger U."/>
            <person name="Hilbert H."/>
            <person name="Braun M."/>
            <person name="Holzer E."/>
            <person name="Brandt A."/>
            <person name="Peters S."/>
            <person name="van Staveren M."/>
            <person name="Dirkse W."/>
            <person name="Mooijman P."/>
            <person name="Klein Lankhorst R."/>
            <person name="Rose M."/>
            <person name="Hauf J."/>
            <person name="Koetter P."/>
            <person name="Berneiser S."/>
            <person name="Hempel S."/>
            <person name="Feldpausch M."/>
            <person name="Lamberth S."/>
            <person name="Van den Daele H."/>
            <person name="De Keyser A."/>
            <person name="Buysshaert C."/>
            <person name="Gielen J."/>
            <person name="Villarroel R."/>
            <person name="De Clercq R."/>
            <person name="van Montagu M."/>
            <person name="Rogers J."/>
            <person name="Cronin A."/>
            <person name="Quail M.A."/>
            <person name="Bray-Allen S."/>
            <person name="Clark L."/>
            <person name="Doggett J."/>
            <person name="Hall S."/>
            <person name="Kay M."/>
            <person name="Lennard N."/>
            <person name="McLay K."/>
            <person name="Mayes R."/>
            <person name="Pettett A."/>
            <person name="Rajandream M.A."/>
            <person name="Lyne M."/>
            <person name="Benes V."/>
            <person name="Rechmann S."/>
            <person name="Borkova D."/>
            <person name="Bloecker H."/>
            <person name="Scharfe M."/>
            <person name="Grimm M."/>
            <person name="Loehnert T.-H."/>
            <person name="Dose S."/>
            <person name="de Haan M."/>
            <person name="Maarse A.C."/>
            <person name="Schaefer M."/>
            <person name="Mueller-Auer S."/>
            <person name="Gabel C."/>
            <person name="Fuchs M."/>
            <person name="Fartmann B."/>
            <person name="Granderath K."/>
            <person name="Dauner D."/>
            <person name="Herzl A."/>
            <person name="Neumann S."/>
            <person name="Argiriou A."/>
            <person name="Vitale D."/>
            <person name="Liguori R."/>
            <person name="Piravandi E."/>
            <person name="Massenet O."/>
            <person name="Quigley F."/>
            <person name="Clabauld G."/>
            <person name="Muendlein A."/>
            <person name="Felber R."/>
            <person name="Schnabl S."/>
            <person name="Hiller R."/>
            <person name="Schmidt W."/>
            <person name="Lecharny A."/>
            <person name="Aubourg S."/>
            <person name="Chefdor F."/>
            <person name="Cooke R."/>
            <person name="Berger C."/>
            <person name="Monfort A."/>
            <person name="Casacuberta E."/>
            <person name="Gibbons T."/>
            <person name="Weber N."/>
            <person name="Vandenbol M."/>
            <person name="Bargues M."/>
            <person name="Terol J."/>
            <person name="Torres A."/>
            <person name="Perez-Perez A."/>
            <person name="Purnelle B."/>
            <person name="Bent E."/>
            <person name="Johnson S."/>
            <person name="Tacon D."/>
            <person name="Jesse T."/>
            <person name="Heijnen L."/>
            <person name="Schwarz S."/>
            <person name="Scholler P."/>
            <person name="Heber S."/>
            <person name="Francs P."/>
            <person name="Bielke C."/>
            <person name="Frishman D."/>
            <person name="Haase D."/>
            <person name="Lemcke K."/>
            <person name="Mewes H.-W."/>
            <person name="Stocker S."/>
            <person name="Zaccaria P."/>
            <person name="Bevan M."/>
            <person name="Wilson R.K."/>
            <person name="de la Bastide M."/>
            <person name="Habermann K."/>
            <person name="Parnell L."/>
            <person name="Dedhia N."/>
            <person name="Gnoj L."/>
            <person name="Schutz K."/>
            <person name="Huang E."/>
            <person name="Spiegel L."/>
            <person name="Sekhon M."/>
            <person name="Murray J."/>
            <person name="Sheet P."/>
            <person name="Cordes M."/>
            <person name="Abu-Threideh J."/>
            <person name="Stoneking T."/>
            <person name="Kalicki J."/>
            <person name="Graves T."/>
            <person name="Harmon G."/>
            <person name="Edwards J."/>
            <person name="Latreille P."/>
            <person name="Courtney L."/>
            <person name="Cloud J."/>
            <person name="Abbott A."/>
            <person name="Scott K."/>
            <person name="Johnson D."/>
            <person name="Minx P."/>
            <person name="Bentley D."/>
            <person name="Fulton B."/>
            <person name="Miller N."/>
            <person name="Greco T."/>
            <person name="Kemp K."/>
            <person name="Kramer J."/>
            <person name="Fulton L."/>
            <person name="Mardis E."/>
            <person name="Dante M."/>
            <person name="Pepin K."/>
            <person name="Hillier L.W."/>
            <person name="Nelson J."/>
            <person name="Spieth J."/>
            <person name="Ryan E."/>
            <person name="Andrews S."/>
            <person name="Geisel C."/>
            <person name="Layman D."/>
            <person name="Du H."/>
            <person name="Ali J."/>
            <person name="Berghoff A."/>
            <person name="Jones K."/>
            <person name="Drone K."/>
            <person name="Cotton M."/>
            <person name="Joshu C."/>
            <person name="Antonoiu B."/>
            <person name="Zidanic M."/>
            <person name="Strong C."/>
            <person name="Sun H."/>
            <person name="Lamar B."/>
            <person name="Yordan C."/>
            <person name="Ma P."/>
            <person name="Zhong J."/>
            <person name="Preston R."/>
            <person name="Vil D."/>
            <person name="Shekher M."/>
            <person name="Matero A."/>
            <person name="Shah R."/>
            <person name="Swaby I.K."/>
            <person name="O'Shaughnessy A."/>
            <person name="Rodriguez M."/>
            <person name="Hoffman J."/>
            <person name="Till S."/>
            <person name="Granat S."/>
            <person name="Shohdy N."/>
            <person name="Hasegawa A."/>
            <person name="Hameed A."/>
            <person name="Lodhi M."/>
            <person name="Johnson A."/>
            <person name="Chen E."/>
            <person name="Marra M.A."/>
            <person name="Martienssen R."/>
            <person name="McCombie W.R."/>
        </authorList>
    </citation>
    <scope>NUCLEOTIDE SEQUENCE [LARGE SCALE GENOMIC DNA]</scope>
    <source>
        <strain>cv. Columbia</strain>
    </source>
</reference>
<reference key="2">
    <citation type="journal article" date="2017" name="Plant J.">
        <title>Araport11: a complete reannotation of the Arabidopsis thaliana reference genome.</title>
        <authorList>
            <person name="Cheng C.Y."/>
            <person name="Krishnakumar V."/>
            <person name="Chan A.P."/>
            <person name="Thibaud-Nissen F."/>
            <person name="Schobel S."/>
            <person name="Town C.D."/>
        </authorList>
    </citation>
    <scope>GENOME REANNOTATION</scope>
    <source>
        <strain>cv. Columbia</strain>
    </source>
</reference>
<reference key="3">
    <citation type="journal article" date="2003" name="Science">
        <title>Empirical analysis of transcriptional activity in the Arabidopsis genome.</title>
        <authorList>
            <person name="Yamada K."/>
            <person name="Lim J."/>
            <person name="Dale J.M."/>
            <person name="Chen H."/>
            <person name="Shinn P."/>
            <person name="Palm C.J."/>
            <person name="Southwick A.M."/>
            <person name="Wu H.C."/>
            <person name="Kim C.J."/>
            <person name="Nguyen M."/>
            <person name="Pham P.K."/>
            <person name="Cheuk R.F."/>
            <person name="Karlin-Newmann G."/>
            <person name="Liu S.X."/>
            <person name="Lam B."/>
            <person name="Sakano H."/>
            <person name="Wu T."/>
            <person name="Yu G."/>
            <person name="Miranda M."/>
            <person name="Quach H.L."/>
            <person name="Tripp M."/>
            <person name="Chang C.H."/>
            <person name="Lee J.M."/>
            <person name="Toriumi M.J."/>
            <person name="Chan M.M."/>
            <person name="Tang C.C."/>
            <person name="Onodera C.S."/>
            <person name="Deng J.M."/>
            <person name="Akiyama K."/>
            <person name="Ansari Y."/>
            <person name="Arakawa T."/>
            <person name="Banh J."/>
            <person name="Banno F."/>
            <person name="Bowser L."/>
            <person name="Brooks S.Y."/>
            <person name="Carninci P."/>
            <person name="Chao Q."/>
            <person name="Choy N."/>
            <person name="Enju A."/>
            <person name="Goldsmith A.D."/>
            <person name="Gurjal M."/>
            <person name="Hansen N.F."/>
            <person name="Hayashizaki Y."/>
            <person name="Johnson-Hopson C."/>
            <person name="Hsuan V.W."/>
            <person name="Iida K."/>
            <person name="Karnes M."/>
            <person name="Khan S."/>
            <person name="Koesema E."/>
            <person name="Ishida J."/>
            <person name="Jiang P.X."/>
            <person name="Jones T."/>
            <person name="Kawai J."/>
            <person name="Kamiya A."/>
            <person name="Meyers C."/>
            <person name="Nakajima M."/>
            <person name="Narusaka M."/>
            <person name="Seki M."/>
            <person name="Sakurai T."/>
            <person name="Satou M."/>
            <person name="Tamse R."/>
            <person name="Vaysberg M."/>
            <person name="Wallender E.K."/>
            <person name="Wong C."/>
            <person name="Yamamura Y."/>
            <person name="Yuan S."/>
            <person name="Shinozaki K."/>
            <person name="Davis R.W."/>
            <person name="Theologis A."/>
            <person name="Ecker J.R."/>
        </authorList>
    </citation>
    <scope>NUCLEOTIDE SEQUENCE [LARGE SCALE MRNA]</scope>
    <source>
        <strain>cv. Columbia</strain>
    </source>
</reference>
<reference key="4">
    <citation type="submission" date="2002-03" db="EMBL/GenBank/DDBJ databases">
        <title>Full-length cDNA from Arabidopsis thaliana.</title>
        <authorList>
            <person name="Brover V.V."/>
            <person name="Troukhan M.E."/>
            <person name="Alexandrov N.A."/>
            <person name="Lu Y.-P."/>
            <person name="Flavell R.B."/>
            <person name="Feldmann K.A."/>
        </authorList>
    </citation>
    <scope>NUCLEOTIDE SEQUENCE [LARGE SCALE MRNA]</scope>
    <source>
        <strain>cv. Columbia</strain>
    </source>
</reference>
<reference key="5">
    <citation type="journal article" date="2007" name="Mol. Cell. Proteomics">
        <title>Multidimensional protein identification technology (MudPIT) analysis of ubiquitinated proteins in plants.</title>
        <authorList>
            <person name="Maor R."/>
            <person name="Jones A."/>
            <person name="Nuehse T.S."/>
            <person name="Studholme D.J."/>
            <person name="Peck S.C."/>
            <person name="Shirasu K."/>
        </authorList>
    </citation>
    <scope>UBIQUITINATION [LARGE SCALE ANALYSIS] AT LYS-52</scope>
    <scope>IDENTIFICATION BY MASS SPECTROMETRY [LARGE SCALE ANALYSIS]</scope>
    <source>
        <strain>cv. Landsberg erecta</strain>
    </source>
</reference>
<reference key="6">
    <citation type="journal article" date="2011" name="Plant Cell">
        <title>An Src homology 3 domain-like fold protein forms a ferredoxin binding site for the chloroplast NADH dehydrogenase-like complex in Arabidopsis.</title>
        <authorList>
            <person name="Yamamoto H."/>
            <person name="Peng L."/>
            <person name="Fukao Y."/>
            <person name="Shikanai T."/>
        </authorList>
    </citation>
    <scope>COMPONENT OF THE NDH COMPLEX</scope>
    <scope>SUBUNIT</scope>
    <scope>DISRUPTION PHENOTYPE</scope>
    <scope>SUBCELLULAR LOCATION</scope>
    <scope>FUNCTION</scope>
</reference>
<reference key="7">
    <citation type="journal article" date="2011" name="Plant Cell Physiol.">
        <title>Structure of the chloroplast NADH dehydrogenase-like complex: nomenclature for nuclear-encoded subunits.</title>
        <authorList>
            <person name="Ifuku K."/>
            <person name="Endo T."/>
            <person name="Shikanai T."/>
            <person name="Aro E.M."/>
        </authorList>
    </citation>
    <scope>NOMENCLATURE</scope>
    <scope>COMPONENT OF THE NDH COMPLEX</scope>
</reference>
<reference key="8">
    <citation type="journal article" date="2013" name="J. Biol. Chem.">
        <title>In planta mutagenesis of Src homology 3 domain-like fold of NdhS, a ferredoxin-binding subunit of the chloroplast NADH dehydrogenase-like complex in Arabidopsis: a conserved Arg-193 plays a critical role in ferredoxin binding.</title>
        <authorList>
            <person name="Yamamoto H."/>
            <person name="Shikanai T."/>
        </authorList>
    </citation>
    <scope>COMPONENT OF THE NDH COMPLEX</scope>
    <scope>SUBUNIT</scope>
    <scope>MUTAGENESIS OF ARG-193</scope>
    <scope>FUNCTION</scope>
</reference>
<protein>
    <recommendedName>
        <fullName evidence="8">NAD(P)H-quinone oxidoreductase subunit S, chloroplastic</fullName>
        <ecNumber evidence="8">7.1.1.-</ecNumber>
    </recommendedName>
    <alternativeName>
        <fullName evidence="7">NAD(P)H dehydrogenase subunit S</fullName>
        <shortName evidence="8">NDH subunit S</shortName>
    </alternativeName>
    <alternativeName>
        <fullName evidence="8">NADH-plastoquinone oxidoreductase subunit S</fullName>
    </alternativeName>
    <alternativeName>
        <fullName evidence="6">Protein CHLORORESPIRATORY REDUCTION 31</fullName>
    </alternativeName>
</protein>
<evidence type="ECO:0000255" key="1"/>
<evidence type="ECO:0000256" key="2">
    <source>
        <dbReference type="SAM" id="MobiDB-lite"/>
    </source>
</evidence>
<evidence type="ECO:0000269" key="3">
    <source>
    </source>
</evidence>
<evidence type="ECO:0000269" key="4">
    <source>
    </source>
</evidence>
<evidence type="ECO:0000269" key="5">
    <source>
    </source>
</evidence>
<evidence type="ECO:0000303" key="6">
    <source>
    </source>
</evidence>
<evidence type="ECO:0000303" key="7">
    <source>
    </source>
</evidence>
<evidence type="ECO:0000305" key="8"/>
<evidence type="ECO:0000312" key="9">
    <source>
        <dbReference type="Araport" id="AT4G23890"/>
    </source>
</evidence>
<evidence type="ECO:0000312" key="10">
    <source>
        <dbReference type="EMBL" id="CAB43889.1"/>
    </source>
</evidence>
<evidence type="ECO:0000312" key="11">
    <source>
        <dbReference type="Proteomes" id="UP000006548"/>
    </source>
</evidence>
<evidence type="ECO:0007744" key="12">
    <source>
    </source>
</evidence>
<accession>Q9T0A4</accession>
<accession>Q93Z46</accession>
<keyword id="KW-0150">Chloroplast</keyword>
<keyword id="KW-1017">Isopeptide bond</keyword>
<keyword id="KW-0472">Membrane</keyword>
<keyword id="KW-0520">NAD</keyword>
<keyword id="KW-0521">NADP</keyword>
<keyword id="KW-0934">Plastid</keyword>
<keyword id="KW-0618">Plastoquinone</keyword>
<keyword id="KW-0874">Quinone</keyword>
<keyword id="KW-1185">Reference proteome</keyword>
<keyword id="KW-0793">Thylakoid</keyword>
<keyword id="KW-0809">Transit peptide</keyword>
<keyword id="KW-1278">Translocase</keyword>
<keyword id="KW-0813">Transport</keyword>
<keyword id="KW-0832">Ubl conjugation</keyword>
<comment type="function">
    <text evidence="3 5 8">NDH shuttles electrons from NAD(P)H:plastoquinone, via FMN and iron-sulfur (Fe-S) centers, to quinones in the photosynthetic chain and possibly in a chloroplast respiratory chain. The immediate electron acceptor for the enzyme in this species is believed to be plastoquinone. Couples the redox reaction to proton translocation, and thus conserves the redox energy in a proton gradient (Probable). Required for the efficient operation of ferredoxin-dependent plastoquinone reduction. Forms the electron donor-binding subcomplex in association with the NDHT and NDHU subunits (PubMed:21505067, PubMed:24225949).</text>
</comment>
<comment type="catalytic activity">
    <reaction evidence="8">
        <text>a plastoquinone + NADH + (n+1) H(+)(in) = a plastoquinol + NAD(+) + n H(+)(out)</text>
        <dbReference type="Rhea" id="RHEA:42608"/>
        <dbReference type="Rhea" id="RHEA-COMP:9561"/>
        <dbReference type="Rhea" id="RHEA-COMP:9562"/>
        <dbReference type="ChEBI" id="CHEBI:15378"/>
        <dbReference type="ChEBI" id="CHEBI:17757"/>
        <dbReference type="ChEBI" id="CHEBI:57540"/>
        <dbReference type="ChEBI" id="CHEBI:57945"/>
        <dbReference type="ChEBI" id="CHEBI:62192"/>
    </reaction>
</comment>
<comment type="catalytic activity">
    <reaction evidence="8">
        <text>a plastoquinone + NADPH + (n+1) H(+)(in) = a plastoquinol + NADP(+) + n H(+)(out)</text>
        <dbReference type="Rhea" id="RHEA:42612"/>
        <dbReference type="Rhea" id="RHEA-COMP:9561"/>
        <dbReference type="Rhea" id="RHEA-COMP:9562"/>
        <dbReference type="ChEBI" id="CHEBI:15378"/>
        <dbReference type="ChEBI" id="CHEBI:17757"/>
        <dbReference type="ChEBI" id="CHEBI:57783"/>
        <dbReference type="ChEBI" id="CHEBI:58349"/>
        <dbReference type="ChEBI" id="CHEBI:62192"/>
    </reaction>
</comment>
<comment type="subunit">
    <text evidence="3 4 5">Part of the chloroplast NDH complex, composed of a mixture of chloroplast and nucleus encoded subunits (PubMed:21785130). Component of the electron donor-binding subcomplex, at least composed of NDHS, NDHT and NDHU. Interacts with the NDH subcomplex A via the protein NDHT and NDHU (PubMed:21505067, PubMed:24225949).</text>
</comment>
<comment type="subcellular location">
    <subcellularLocation>
        <location evidence="3">Plastid</location>
        <location evidence="3">Chloroplast thylakoid membrane</location>
        <topology evidence="3">Peripheral membrane protein</topology>
        <orientation evidence="3">Stromal side</orientation>
    </subcellularLocation>
</comment>
<comment type="PTM">
    <text>Arg-193 is the critical site for the high affinity binding of NDH to ferredoxin.</text>
</comment>
<comment type="disruption phenotype">
    <text evidence="3">Malfunction of the NDH complex.</text>
</comment>
<comment type="sequence caution" evidence="8">
    <conflict type="frameshift">
        <sequence resource="EMBL-CDS" id="AAL25559"/>
    </conflict>
</comment>
<dbReference type="EC" id="7.1.1.-" evidence="8"/>
<dbReference type="EMBL" id="AL078468">
    <property type="protein sequence ID" value="CAB43889.1"/>
    <property type="molecule type" value="Genomic_DNA"/>
</dbReference>
<dbReference type="EMBL" id="AL161560">
    <property type="protein sequence ID" value="CAB81307.1"/>
    <property type="molecule type" value="Genomic_DNA"/>
</dbReference>
<dbReference type="EMBL" id="CP002687">
    <property type="protein sequence ID" value="AEE84820.1"/>
    <property type="molecule type" value="Genomic_DNA"/>
</dbReference>
<dbReference type="EMBL" id="AY058143">
    <property type="protein sequence ID" value="AAL25559.1"/>
    <property type="status" value="ALT_FRAME"/>
    <property type="molecule type" value="mRNA"/>
</dbReference>
<dbReference type="EMBL" id="AY128349">
    <property type="protein sequence ID" value="AAM91552.1"/>
    <property type="molecule type" value="mRNA"/>
</dbReference>
<dbReference type="EMBL" id="BT000002">
    <property type="protein sequence ID" value="AAN15321.1"/>
    <property type="molecule type" value="mRNA"/>
</dbReference>
<dbReference type="EMBL" id="AY087028">
    <property type="protein sequence ID" value="AAM64589.1"/>
    <property type="molecule type" value="mRNA"/>
</dbReference>
<dbReference type="PIR" id="T08908">
    <property type="entry name" value="T08908"/>
</dbReference>
<dbReference type="RefSeq" id="NP_194120.1">
    <property type="nucleotide sequence ID" value="NM_118521.3"/>
</dbReference>
<dbReference type="SMR" id="Q9T0A4"/>
<dbReference type="FunCoup" id="Q9T0A4">
    <property type="interactions" value="1639"/>
</dbReference>
<dbReference type="STRING" id="3702.Q9T0A4"/>
<dbReference type="iPTMnet" id="Q9T0A4"/>
<dbReference type="PaxDb" id="3702-AT4G23890.1"/>
<dbReference type="ProteomicsDB" id="251167"/>
<dbReference type="EnsemblPlants" id="AT4G23890.1">
    <property type="protein sequence ID" value="AT4G23890.1"/>
    <property type="gene ID" value="AT4G23890"/>
</dbReference>
<dbReference type="GeneID" id="828489"/>
<dbReference type="Gramene" id="AT4G23890.1">
    <property type="protein sequence ID" value="AT4G23890.1"/>
    <property type="gene ID" value="AT4G23890"/>
</dbReference>
<dbReference type="KEGG" id="ath:AT4G23890"/>
<dbReference type="Araport" id="AT4G23890"/>
<dbReference type="TAIR" id="AT4G23890">
    <property type="gene designation" value="NDHS"/>
</dbReference>
<dbReference type="eggNOG" id="ENOG502RXJM">
    <property type="taxonomic scope" value="Eukaryota"/>
</dbReference>
<dbReference type="HOGENOM" id="CLU_094759_0_0_1"/>
<dbReference type="InParanoid" id="Q9T0A4"/>
<dbReference type="OMA" id="CILEPLI"/>
<dbReference type="OrthoDB" id="2015351at2759"/>
<dbReference type="PhylomeDB" id="Q9T0A4"/>
<dbReference type="PRO" id="PR:Q9T0A4"/>
<dbReference type="Proteomes" id="UP000006548">
    <property type="component" value="Chromosome 4"/>
</dbReference>
<dbReference type="ExpressionAtlas" id="Q9T0A4">
    <property type="expression patterns" value="baseline and differential"/>
</dbReference>
<dbReference type="GO" id="GO:0009507">
    <property type="term" value="C:chloroplast"/>
    <property type="evidence" value="ECO:0007005"/>
    <property type="project" value="TAIR"/>
</dbReference>
<dbReference type="GO" id="GO:0009534">
    <property type="term" value="C:chloroplast thylakoid"/>
    <property type="evidence" value="ECO:0007005"/>
    <property type="project" value="TAIR"/>
</dbReference>
<dbReference type="GO" id="GO:0009535">
    <property type="term" value="C:chloroplast thylakoid membrane"/>
    <property type="evidence" value="ECO:0000315"/>
    <property type="project" value="UniProtKB"/>
</dbReference>
<dbReference type="GO" id="GO:0005829">
    <property type="term" value="C:cytosol"/>
    <property type="evidence" value="ECO:0007005"/>
    <property type="project" value="TAIR"/>
</dbReference>
<dbReference type="GO" id="GO:0010598">
    <property type="term" value="C:NAD(P)H dehydrogenase complex (plastoquinone)"/>
    <property type="evidence" value="ECO:0000315"/>
    <property type="project" value="UniProtKB"/>
</dbReference>
<dbReference type="GO" id="GO:0048038">
    <property type="term" value="F:quinone binding"/>
    <property type="evidence" value="ECO:0007669"/>
    <property type="project" value="UniProtKB-KW"/>
</dbReference>
<dbReference type="GO" id="GO:0009767">
    <property type="term" value="P:photosynthetic electron transport chain"/>
    <property type="evidence" value="ECO:0000315"/>
    <property type="project" value="UniProtKB"/>
</dbReference>
<dbReference type="FunFam" id="2.30.30.140:FF:000128">
    <property type="entry name" value="NAD(P)H-quinone oxidoreductase subunit S, chloroplastic"/>
    <property type="match status" value="1"/>
</dbReference>
<dbReference type="Gene3D" id="2.30.30.140">
    <property type="match status" value="1"/>
</dbReference>
<dbReference type="InterPro" id="IPR021659">
    <property type="entry name" value="NdhS"/>
</dbReference>
<dbReference type="PANTHER" id="PTHR35494">
    <property type="entry name" value="NAD(P)H-QUINONE OXIDOREDUCTASE SUBUNIT S, CHLOROPLASTIC"/>
    <property type="match status" value="1"/>
</dbReference>
<dbReference type="PANTHER" id="PTHR35494:SF1">
    <property type="entry name" value="NAD(P)H-QUINONE OXIDOREDUCTASE SUBUNIT S, CHLOROPLASTIC"/>
    <property type="match status" value="1"/>
</dbReference>
<dbReference type="Pfam" id="PF11623">
    <property type="entry name" value="NdhS"/>
    <property type="match status" value="1"/>
</dbReference>
<sequence>MATSSITIPTIRTPIHRSKFLGQTHQFSTVNRSVFPPPKQQSKLYQVKAMGKFNLWEVMGGRGLCNGEKGIEKELQRNIEDEQETSKAENNETERESDDSNLSFKVPEDGFEKEMMGLTGGFPGGEKGLKTFIEKNPPPPPPPPPAKQGSDASAVATDKKPKAPKLPLLMPGMIAIVKNQNSPYHMYCGIVQRITDGKAGVLFEGGNWDRLITFRLEELERREKGPPGKNPKSCILEPLIEQMQKEEAAP</sequence>
<feature type="transit peptide" description="Chloroplast" evidence="1">
    <location>
        <begin position="1"/>
        <end position="48"/>
    </location>
</feature>
<feature type="chain" id="PRO_0000431818" description="NAD(P)H-quinone oxidoreductase subunit S, chloroplastic" evidence="1">
    <location>
        <begin position="49"/>
        <end position="250"/>
    </location>
</feature>
<feature type="region of interest" description="Disordered" evidence="2">
    <location>
        <begin position="76"/>
        <end position="163"/>
    </location>
</feature>
<feature type="region of interest" description="Disordered" evidence="2">
    <location>
        <begin position="222"/>
        <end position="250"/>
    </location>
</feature>
<feature type="compositionally biased region" description="Basic and acidic residues" evidence="2">
    <location>
        <begin position="76"/>
        <end position="94"/>
    </location>
</feature>
<feature type="compositionally biased region" description="Basic and acidic residues" evidence="2">
    <location>
        <begin position="106"/>
        <end position="115"/>
    </location>
</feature>
<feature type="compositionally biased region" description="Pro residues" evidence="2">
    <location>
        <begin position="136"/>
        <end position="146"/>
    </location>
</feature>
<feature type="cross-link" description="Glycyl lysine isopeptide (Lys-Gly) (interchain with G-Cter in ubiquitin)" evidence="12">
    <location>
        <position position="52"/>
    </location>
</feature>
<feature type="mutagenesis site" description="Strongly decreases the NDH ferredoxin-dependent plastoquinone reduction.">
    <original>R</original>
    <variation>Q</variation>
    <variation>A</variation>
    <variation>E</variation>
    <variation>D</variation>
    <location>
        <position position="193"/>
    </location>
</feature>